<accession>Q1WRY8</accession>
<organism>
    <name type="scientific">Ligilactobacillus salivarius (strain UCC118)</name>
    <name type="common">Lactobacillus salivarius</name>
    <dbReference type="NCBI Taxonomy" id="362948"/>
    <lineage>
        <taxon>Bacteria</taxon>
        <taxon>Bacillati</taxon>
        <taxon>Bacillota</taxon>
        <taxon>Bacilli</taxon>
        <taxon>Lactobacillales</taxon>
        <taxon>Lactobacillaceae</taxon>
        <taxon>Ligilactobacillus</taxon>
    </lineage>
</organism>
<feature type="chain" id="PRO_1000120330" description="GMP synthase [glutamine-hydrolyzing]">
    <location>
        <begin position="1"/>
        <end position="518"/>
    </location>
</feature>
<feature type="domain" description="Glutamine amidotransferase type-1" evidence="1">
    <location>
        <begin position="11"/>
        <end position="203"/>
    </location>
</feature>
<feature type="domain" description="GMPS ATP-PPase" evidence="1">
    <location>
        <begin position="204"/>
        <end position="393"/>
    </location>
</feature>
<feature type="active site" description="Nucleophile" evidence="1">
    <location>
        <position position="88"/>
    </location>
</feature>
<feature type="active site" evidence="1">
    <location>
        <position position="177"/>
    </location>
</feature>
<feature type="active site" evidence="1">
    <location>
        <position position="179"/>
    </location>
</feature>
<feature type="binding site" evidence="1">
    <location>
        <begin position="231"/>
        <end position="237"/>
    </location>
    <ligand>
        <name>ATP</name>
        <dbReference type="ChEBI" id="CHEBI:30616"/>
    </ligand>
</feature>
<comment type="function">
    <text evidence="1">Catalyzes the synthesis of GMP from XMP.</text>
</comment>
<comment type="catalytic activity">
    <reaction evidence="1">
        <text>XMP + L-glutamine + ATP + H2O = GMP + L-glutamate + AMP + diphosphate + 2 H(+)</text>
        <dbReference type="Rhea" id="RHEA:11680"/>
        <dbReference type="ChEBI" id="CHEBI:15377"/>
        <dbReference type="ChEBI" id="CHEBI:15378"/>
        <dbReference type="ChEBI" id="CHEBI:29985"/>
        <dbReference type="ChEBI" id="CHEBI:30616"/>
        <dbReference type="ChEBI" id="CHEBI:33019"/>
        <dbReference type="ChEBI" id="CHEBI:57464"/>
        <dbReference type="ChEBI" id="CHEBI:58115"/>
        <dbReference type="ChEBI" id="CHEBI:58359"/>
        <dbReference type="ChEBI" id="CHEBI:456215"/>
        <dbReference type="EC" id="6.3.5.2"/>
    </reaction>
</comment>
<comment type="pathway">
    <text evidence="1">Purine metabolism; GMP biosynthesis; GMP from XMP (L-Gln route): step 1/1.</text>
</comment>
<comment type="subunit">
    <text evidence="1">Homodimer.</text>
</comment>
<name>GUAA_LIGS1</name>
<proteinExistence type="inferred from homology"/>
<protein>
    <recommendedName>
        <fullName evidence="1">GMP synthase [glutamine-hydrolyzing]</fullName>
        <ecNumber evidence="1">6.3.5.2</ecNumber>
    </recommendedName>
    <alternativeName>
        <fullName evidence="1">GMP synthetase</fullName>
    </alternativeName>
    <alternativeName>
        <fullName evidence="1">Glutamine amidotransferase</fullName>
    </alternativeName>
</protein>
<evidence type="ECO:0000255" key="1">
    <source>
        <dbReference type="HAMAP-Rule" id="MF_00344"/>
    </source>
</evidence>
<dbReference type="EC" id="6.3.5.2" evidence="1"/>
<dbReference type="EMBL" id="CP000233">
    <property type="protein sequence ID" value="ABE00341.1"/>
    <property type="molecule type" value="Genomic_DNA"/>
</dbReference>
<dbReference type="RefSeq" id="YP_536424.1">
    <property type="nucleotide sequence ID" value="NC_007929.1"/>
</dbReference>
<dbReference type="SMR" id="Q1WRY8"/>
<dbReference type="STRING" id="362948.LSL_1537"/>
<dbReference type="MEROPS" id="C26.957"/>
<dbReference type="KEGG" id="lsl:LSL_1537"/>
<dbReference type="PATRIC" id="fig|362948.14.peg.1628"/>
<dbReference type="HOGENOM" id="CLU_014340_0_5_9"/>
<dbReference type="OrthoDB" id="9802219at2"/>
<dbReference type="UniPathway" id="UPA00189">
    <property type="reaction ID" value="UER00296"/>
</dbReference>
<dbReference type="Proteomes" id="UP000006559">
    <property type="component" value="Chromosome"/>
</dbReference>
<dbReference type="GO" id="GO:0005829">
    <property type="term" value="C:cytosol"/>
    <property type="evidence" value="ECO:0007669"/>
    <property type="project" value="TreeGrafter"/>
</dbReference>
<dbReference type="GO" id="GO:0005524">
    <property type="term" value="F:ATP binding"/>
    <property type="evidence" value="ECO:0007669"/>
    <property type="project" value="UniProtKB-UniRule"/>
</dbReference>
<dbReference type="GO" id="GO:0003921">
    <property type="term" value="F:GMP synthase activity"/>
    <property type="evidence" value="ECO:0007669"/>
    <property type="project" value="InterPro"/>
</dbReference>
<dbReference type="CDD" id="cd01742">
    <property type="entry name" value="GATase1_GMP_Synthase"/>
    <property type="match status" value="1"/>
</dbReference>
<dbReference type="CDD" id="cd01997">
    <property type="entry name" value="GMP_synthase_C"/>
    <property type="match status" value="1"/>
</dbReference>
<dbReference type="FunFam" id="3.30.300.10:FF:000002">
    <property type="entry name" value="GMP synthase [glutamine-hydrolyzing]"/>
    <property type="match status" value="1"/>
</dbReference>
<dbReference type="FunFam" id="3.40.50.620:FF:000001">
    <property type="entry name" value="GMP synthase [glutamine-hydrolyzing]"/>
    <property type="match status" value="1"/>
</dbReference>
<dbReference type="FunFam" id="3.40.50.880:FF:000001">
    <property type="entry name" value="GMP synthase [glutamine-hydrolyzing]"/>
    <property type="match status" value="1"/>
</dbReference>
<dbReference type="Gene3D" id="3.30.300.10">
    <property type="match status" value="1"/>
</dbReference>
<dbReference type="Gene3D" id="3.40.50.880">
    <property type="match status" value="1"/>
</dbReference>
<dbReference type="Gene3D" id="3.40.50.620">
    <property type="entry name" value="HUPs"/>
    <property type="match status" value="1"/>
</dbReference>
<dbReference type="HAMAP" id="MF_00344">
    <property type="entry name" value="GMP_synthase"/>
    <property type="match status" value="1"/>
</dbReference>
<dbReference type="InterPro" id="IPR029062">
    <property type="entry name" value="Class_I_gatase-like"/>
</dbReference>
<dbReference type="InterPro" id="IPR017926">
    <property type="entry name" value="GATASE"/>
</dbReference>
<dbReference type="InterPro" id="IPR001674">
    <property type="entry name" value="GMP_synth_C"/>
</dbReference>
<dbReference type="InterPro" id="IPR004739">
    <property type="entry name" value="GMP_synth_GATase"/>
</dbReference>
<dbReference type="InterPro" id="IPR022955">
    <property type="entry name" value="GMP_synthase"/>
</dbReference>
<dbReference type="InterPro" id="IPR025777">
    <property type="entry name" value="GMPS_ATP_PPase_dom"/>
</dbReference>
<dbReference type="InterPro" id="IPR022310">
    <property type="entry name" value="NAD/GMP_synthase"/>
</dbReference>
<dbReference type="InterPro" id="IPR014729">
    <property type="entry name" value="Rossmann-like_a/b/a_fold"/>
</dbReference>
<dbReference type="NCBIfam" id="TIGR00884">
    <property type="entry name" value="guaA_Cterm"/>
    <property type="match status" value="1"/>
</dbReference>
<dbReference type="NCBIfam" id="TIGR00888">
    <property type="entry name" value="guaA_Nterm"/>
    <property type="match status" value="1"/>
</dbReference>
<dbReference type="NCBIfam" id="NF000848">
    <property type="entry name" value="PRK00074.1"/>
    <property type="match status" value="1"/>
</dbReference>
<dbReference type="PANTHER" id="PTHR11922:SF2">
    <property type="entry name" value="GMP SYNTHASE [GLUTAMINE-HYDROLYZING]"/>
    <property type="match status" value="1"/>
</dbReference>
<dbReference type="PANTHER" id="PTHR11922">
    <property type="entry name" value="GMP SYNTHASE-RELATED"/>
    <property type="match status" value="1"/>
</dbReference>
<dbReference type="Pfam" id="PF00117">
    <property type="entry name" value="GATase"/>
    <property type="match status" value="1"/>
</dbReference>
<dbReference type="Pfam" id="PF00958">
    <property type="entry name" value="GMP_synt_C"/>
    <property type="match status" value="1"/>
</dbReference>
<dbReference type="Pfam" id="PF02540">
    <property type="entry name" value="NAD_synthase"/>
    <property type="match status" value="1"/>
</dbReference>
<dbReference type="PRINTS" id="PR00099">
    <property type="entry name" value="CPSGATASE"/>
</dbReference>
<dbReference type="PRINTS" id="PR00096">
    <property type="entry name" value="GATASE"/>
</dbReference>
<dbReference type="SUPFAM" id="SSF52402">
    <property type="entry name" value="Adenine nucleotide alpha hydrolases-like"/>
    <property type="match status" value="1"/>
</dbReference>
<dbReference type="SUPFAM" id="SSF52317">
    <property type="entry name" value="Class I glutamine amidotransferase-like"/>
    <property type="match status" value="1"/>
</dbReference>
<dbReference type="SUPFAM" id="SSF54810">
    <property type="entry name" value="GMP synthetase C-terminal dimerisation domain"/>
    <property type="match status" value="1"/>
</dbReference>
<dbReference type="PROSITE" id="PS51273">
    <property type="entry name" value="GATASE_TYPE_1"/>
    <property type="match status" value="1"/>
</dbReference>
<dbReference type="PROSITE" id="PS51553">
    <property type="entry name" value="GMPS_ATP_PPASE"/>
    <property type="match status" value="1"/>
</dbReference>
<keyword id="KW-0067">ATP-binding</keyword>
<keyword id="KW-0315">Glutamine amidotransferase</keyword>
<keyword id="KW-0332">GMP biosynthesis</keyword>
<keyword id="KW-0436">Ligase</keyword>
<keyword id="KW-0547">Nucleotide-binding</keyword>
<keyword id="KW-0658">Purine biosynthesis</keyword>
<keyword id="KW-1185">Reference proteome</keyword>
<gene>
    <name evidence="1" type="primary">guaA</name>
    <name type="ordered locus">LSL_1537</name>
</gene>
<reference key="1">
    <citation type="journal article" date="2006" name="Proc. Natl. Acad. Sci. U.S.A.">
        <title>Multireplicon genome architecture of Lactobacillus salivarius.</title>
        <authorList>
            <person name="Claesson M.J."/>
            <person name="Li Y."/>
            <person name="Leahy S."/>
            <person name="Canchaya C."/>
            <person name="van Pijkeren J.P."/>
            <person name="Cerdeno-Tarraga A.M."/>
            <person name="Parkhill J."/>
            <person name="Flynn S."/>
            <person name="O'Sullivan G.C."/>
            <person name="Collins J.K."/>
            <person name="Higgins D."/>
            <person name="Shanahan F."/>
            <person name="Fitzgerald G.F."/>
            <person name="van Sinderen D."/>
            <person name="O'Toole P.W."/>
        </authorList>
    </citation>
    <scope>NUCLEOTIDE SEQUENCE [LARGE SCALE GENOMIC DNA]</scope>
    <source>
        <strain>UCC118</strain>
    </source>
</reference>
<sequence length="518" mass="57874">MANVDMQTFDKIIVLDFGSQYNQLITRRIREFGVYSELLSHKLTAAQIKEMNPKGIIFSGGPNSVYDDGAFQIDPEIFELGIPILGICYGMQLMAHNLSGGKVESADNKEYGKAIITVKNQENVMFKDLPETQTVWMSHGDLVTQVPEGFEVTATSDNCPISAMANDAKKFYGLQFHTEVRNTEYGNDILRHFAFDVCQARSNWSMDDFIDMQIQKIRETVGDKKVLLGLSGGVDSSVVGVLLHKAIGNQLTSIFVDHGLLRKGEAEQVMDSLGGKFGLNIIKVDAKERFLNKLAGVSDPEKKRKIIGNEFIRVFDDESAKLEGIEFLAQGTLYTDIIESGTDTAQTIKSHHNVGGLPEDVQFKLIEPLNTLFKDEVRELGEKLGMPHELVWRQPFPGPGLGIRVIGEITEEKLEIVRDSDLILREEIAKHGLDKEIWQYFTVLPGIRSVGVMGDGRTYDYTVGIRAVTSIDGMTADFAQIPWDVLQEISVRIVNEVDHVNRVVYDITSKPPATIEWE</sequence>